<reference key="1">
    <citation type="journal article" date="2000" name="Nature">
        <title>Sequence and analysis of chromosome 1 of the plant Arabidopsis thaliana.</title>
        <authorList>
            <person name="Theologis A."/>
            <person name="Ecker J.R."/>
            <person name="Palm C.J."/>
            <person name="Federspiel N.A."/>
            <person name="Kaul S."/>
            <person name="White O."/>
            <person name="Alonso J."/>
            <person name="Altafi H."/>
            <person name="Araujo R."/>
            <person name="Bowman C.L."/>
            <person name="Brooks S.Y."/>
            <person name="Buehler E."/>
            <person name="Chan A."/>
            <person name="Chao Q."/>
            <person name="Chen H."/>
            <person name="Cheuk R.F."/>
            <person name="Chin C.W."/>
            <person name="Chung M.K."/>
            <person name="Conn L."/>
            <person name="Conway A.B."/>
            <person name="Conway A.R."/>
            <person name="Creasy T.H."/>
            <person name="Dewar K."/>
            <person name="Dunn P."/>
            <person name="Etgu P."/>
            <person name="Feldblyum T.V."/>
            <person name="Feng J.-D."/>
            <person name="Fong B."/>
            <person name="Fujii C.Y."/>
            <person name="Gill J.E."/>
            <person name="Goldsmith A.D."/>
            <person name="Haas B."/>
            <person name="Hansen N.F."/>
            <person name="Hughes B."/>
            <person name="Huizar L."/>
            <person name="Hunter J.L."/>
            <person name="Jenkins J."/>
            <person name="Johnson-Hopson C."/>
            <person name="Khan S."/>
            <person name="Khaykin E."/>
            <person name="Kim C.J."/>
            <person name="Koo H.L."/>
            <person name="Kremenetskaia I."/>
            <person name="Kurtz D.B."/>
            <person name="Kwan A."/>
            <person name="Lam B."/>
            <person name="Langin-Hooper S."/>
            <person name="Lee A."/>
            <person name="Lee J.M."/>
            <person name="Lenz C.A."/>
            <person name="Li J.H."/>
            <person name="Li Y.-P."/>
            <person name="Lin X."/>
            <person name="Liu S.X."/>
            <person name="Liu Z.A."/>
            <person name="Luros J.S."/>
            <person name="Maiti R."/>
            <person name="Marziali A."/>
            <person name="Militscher J."/>
            <person name="Miranda M."/>
            <person name="Nguyen M."/>
            <person name="Nierman W.C."/>
            <person name="Osborne B.I."/>
            <person name="Pai G."/>
            <person name="Peterson J."/>
            <person name="Pham P.K."/>
            <person name="Rizzo M."/>
            <person name="Rooney T."/>
            <person name="Rowley D."/>
            <person name="Sakano H."/>
            <person name="Salzberg S.L."/>
            <person name="Schwartz J.R."/>
            <person name="Shinn P."/>
            <person name="Southwick A.M."/>
            <person name="Sun H."/>
            <person name="Tallon L.J."/>
            <person name="Tambunga G."/>
            <person name="Toriumi M.J."/>
            <person name="Town C.D."/>
            <person name="Utterback T."/>
            <person name="Van Aken S."/>
            <person name="Vaysberg M."/>
            <person name="Vysotskaia V.S."/>
            <person name="Walker M."/>
            <person name="Wu D."/>
            <person name="Yu G."/>
            <person name="Fraser C.M."/>
            <person name="Venter J.C."/>
            <person name="Davis R.W."/>
        </authorList>
    </citation>
    <scope>NUCLEOTIDE SEQUENCE [LARGE SCALE GENOMIC DNA]</scope>
    <source>
        <strain>cv. Columbia</strain>
    </source>
</reference>
<reference key="2">
    <citation type="journal article" date="2017" name="Plant J.">
        <title>Araport11: a complete reannotation of the Arabidopsis thaliana reference genome.</title>
        <authorList>
            <person name="Cheng C.Y."/>
            <person name="Krishnakumar V."/>
            <person name="Chan A.P."/>
            <person name="Thibaud-Nissen F."/>
            <person name="Schobel S."/>
            <person name="Town C.D."/>
        </authorList>
    </citation>
    <scope>GENOME REANNOTATION</scope>
    <source>
        <strain>cv. Columbia</strain>
    </source>
</reference>
<reference key="3">
    <citation type="journal article" date="2003" name="Science">
        <title>Empirical analysis of transcriptional activity in the Arabidopsis genome.</title>
        <authorList>
            <person name="Yamada K."/>
            <person name="Lim J."/>
            <person name="Dale J.M."/>
            <person name="Chen H."/>
            <person name="Shinn P."/>
            <person name="Palm C.J."/>
            <person name="Southwick A.M."/>
            <person name="Wu H.C."/>
            <person name="Kim C.J."/>
            <person name="Nguyen M."/>
            <person name="Pham P.K."/>
            <person name="Cheuk R.F."/>
            <person name="Karlin-Newmann G."/>
            <person name="Liu S.X."/>
            <person name="Lam B."/>
            <person name="Sakano H."/>
            <person name="Wu T."/>
            <person name="Yu G."/>
            <person name="Miranda M."/>
            <person name="Quach H.L."/>
            <person name="Tripp M."/>
            <person name="Chang C.H."/>
            <person name="Lee J.M."/>
            <person name="Toriumi M.J."/>
            <person name="Chan M.M."/>
            <person name="Tang C.C."/>
            <person name="Onodera C.S."/>
            <person name="Deng J.M."/>
            <person name="Akiyama K."/>
            <person name="Ansari Y."/>
            <person name="Arakawa T."/>
            <person name="Banh J."/>
            <person name="Banno F."/>
            <person name="Bowser L."/>
            <person name="Brooks S.Y."/>
            <person name="Carninci P."/>
            <person name="Chao Q."/>
            <person name="Choy N."/>
            <person name="Enju A."/>
            <person name="Goldsmith A.D."/>
            <person name="Gurjal M."/>
            <person name="Hansen N.F."/>
            <person name="Hayashizaki Y."/>
            <person name="Johnson-Hopson C."/>
            <person name="Hsuan V.W."/>
            <person name="Iida K."/>
            <person name="Karnes M."/>
            <person name="Khan S."/>
            <person name="Koesema E."/>
            <person name="Ishida J."/>
            <person name="Jiang P.X."/>
            <person name="Jones T."/>
            <person name="Kawai J."/>
            <person name="Kamiya A."/>
            <person name="Meyers C."/>
            <person name="Nakajima M."/>
            <person name="Narusaka M."/>
            <person name="Seki M."/>
            <person name="Sakurai T."/>
            <person name="Satou M."/>
            <person name="Tamse R."/>
            <person name="Vaysberg M."/>
            <person name="Wallender E.K."/>
            <person name="Wong C."/>
            <person name="Yamamura Y."/>
            <person name="Yuan S."/>
            <person name="Shinozaki K."/>
            <person name="Davis R.W."/>
            <person name="Theologis A."/>
            <person name="Ecker J.R."/>
        </authorList>
    </citation>
    <scope>NUCLEOTIDE SEQUENCE [LARGE SCALE MRNA]</scope>
    <source>
        <strain>cv. Columbia</strain>
    </source>
</reference>
<reference key="4">
    <citation type="journal article" date="2006" name="Plant Cell">
        <title>Constitutive expression exposes functional redundancy between the Arabidopsis histone H2A gene HTA1 and other H2A gene family members.</title>
        <authorList>
            <person name="Yi H."/>
            <person name="Sardesai N."/>
            <person name="Fujinuma T."/>
            <person name="Chan C.-W."/>
            <person name="Veena X."/>
            <person name="Gelvin S.B."/>
        </authorList>
    </citation>
    <scope>TISSUE SPECIFICITY</scope>
    <scope>NOMENCLATURE</scope>
</reference>
<reference key="5">
    <citation type="journal article" date="2007" name="Nature">
        <title>Control of DNA methylation and heterochromatic silencing by histone H2B deubiquitination.</title>
        <authorList>
            <person name="Sridhar V.V."/>
            <person name="Kapoor A."/>
            <person name="Zhang K."/>
            <person name="Zhu J."/>
            <person name="Zhou T."/>
            <person name="Hasegawa P.M."/>
            <person name="Bressan R.A."/>
            <person name="Zhu J.-K."/>
        </authorList>
    </citation>
    <scope>LACK OF UBIQUITINATION</scope>
    <scope>IDENTIFICATION BY MASS SPECTROMETRY</scope>
</reference>
<protein>
    <recommendedName>
        <fullName>Probable histone H2A.1</fullName>
    </recommendedName>
    <alternativeName>
        <fullName>HTA10</fullName>
    </alternativeName>
</protein>
<evidence type="ECO:0000250" key="1"/>
<evidence type="ECO:0000256" key="2">
    <source>
        <dbReference type="SAM" id="MobiDB-lite"/>
    </source>
</evidence>
<evidence type="ECO:0000269" key="3">
    <source>
    </source>
</evidence>
<evidence type="ECO:0000305" key="4"/>
<comment type="function">
    <text>Core component of nucleosome. Nucleosomes wrap and compact DNA into chromatin, limiting DNA accessibility to the cellular machineries which require DNA as a template. Histones thereby play a central role in transcription regulation, DNA repair, DNA replication and chromosomal stability. DNA accessibility is regulated via a complex set of post-translational modifications of histones, also called histone code, and nucleosome remodeling.</text>
</comment>
<comment type="subunit">
    <text>The nucleosome is a histone octamer containing two molecules each of H2A, H2B, H3 and H4 assembled in one H3-H4 heterotetramer and two H2A-H2B heterodimers. The octamer wraps approximately 147 bp of DNA.</text>
</comment>
<comment type="subcellular location">
    <subcellularLocation>
        <location evidence="1">Nucleus</location>
    </subcellularLocation>
    <subcellularLocation>
        <location evidence="1">Chromosome</location>
    </subcellularLocation>
</comment>
<comment type="tissue specificity">
    <text evidence="3">Low level of expression; mainly in roots. Found in the root cap cells and in non dividing tissues of the plant, including the root elongation and maturation zones and the leaf veins.</text>
</comment>
<comment type="PTM">
    <text>Not ubiquitinated.</text>
</comment>
<comment type="similarity">
    <text evidence="4">Belongs to the histone H2A family.</text>
</comment>
<proteinExistence type="evidence at protein level"/>
<gene>
    <name type="ordered locus">At1g51060</name>
    <name type="ORF">F23H24.9</name>
</gene>
<accession>Q9C681</accession>
<sequence length="132" mass="13934">MAGRGKTLGSGSAKKATTRSSKAGLQFPVGRIARFLKKGKYAERVGAGAPVYLAAVLEYLAAEVLELAGNAARDNKKTRIVPRHIQLAVRNDEELSKLLGDVTIANGGVMPNIHNLLLPKKTGASKPSAEDD</sequence>
<feature type="chain" id="PRO_0000055198" description="Probable histone H2A.1">
    <location>
        <begin position="1"/>
        <end position="132"/>
    </location>
</feature>
<feature type="region of interest" description="Disordered" evidence="2">
    <location>
        <begin position="1"/>
        <end position="22"/>
    </location>
</feature>
<keyword id="KW-0158">Chromosome</keyword>
<keyword id="KW-0238">DNA-binding</keyword>
<keyword id="KW-0544">Nucleosome core</keyword>
<keyword id="KW-0539">Nucleus</keyword>
<keyword id="KW-1185">Reference proteome</keyword>
<organism>
    <name type="scientific">Arabidopsis thaliana</name>
    <name type="common">Mouse-ear cress</name>
    <dbReference type="NCBI Taxonomy" id="3702"/>
    <lineage>
        <taxon>Eukaryota</taxon>
        <taxon>Viridiplantae</taxon>
        <taxon>Streptophyta</taxon>
        <taxon>Embryophyta</taxon>
        <taxon>Tracheophyta</taxon>
        <taxon>Spermatophyta</taxon>
        <taxon>Magnoliopsida</taxon>
        <taxon>eudicotyledons</taxon>
        <taxon>Gunneridae</taxon>
        <taxon>Pentapetalae</taxon>
        <taxon>rosids</taxon>
        <taxon>malvids</taxon>
        <taxon>Brassicales</taxon>
        <taxon>Brassicaceae</taxon>
        <taxon>Camelineae</taxon>
        <taxon>Arabidopsis</taxon>
    </lineage>
</organism>
<name>H2A1_ARATH</name>
<dbReference type="EMBL" id="AC079828">
    <property type="protein sequence ID" value="AAG50540.1"/>
    <property type="molecule type" value="Genomic_DNA"/>
</dbReference>
<dbReference type="EMBL" id="CP002684">
    <property type="protein sequence ID" value="AEE32617.1"/>
    <property type="molecule type" value="Genomic_DNA"/>
</dbReference>
<dbReference type="EMBL" id="AY062945">
    <property type="protein sequence ID" value="AAL33777.1"/>
    <property type="molecule type" value="mRNA"/>
</dbReference>
<dbReference type="EMBL" id="AF370188">
    <property type="protein sequence ID" value="AAK44003.1"/>
    <property type="molecule type" value="mRNA"/>
</dbReference>
<dbReference type="PIR" id="G96547">
    <property type="entry name" value="G96547"/>
</dbReference>
<dbReference type="RefSeq" id="NP_175517.1">
    <property type="nucleotide sequence ID" value="NM_103984.4"/>
</dbReference>
<dbReference type="SMR" id="Q9C681"/>
<dbReference type="BioGRID" id="26753">
    <property type="interactions" value="10"/>
</dbReference>
<dbReference type="FunCoup" id="Q9C681">
    <property type="interactions" value="2201"/>
</dbReference>
<dbReference type="IntAct" id="Q9C681">
    <property type="interactions" value="10"/>
</dbReference>
<dbReference type="STRING" id="3702.Q9C681"/>
<dbReference type="iPTMnet" id="Q9C681"/>
<dbReference type="PaxDb" id="3702-AT1G51060.1"/>
<dbReference type="ProteomicsDB" id="247205"/>
<dbReference type="EnsemblPlants" id="AT1G51060.1">
    <property type="protein sequence ID" value="AT1G51060.1"/>
    <property type="gene ID" value="AT1G51060"/>
</dbReference>
<dbReference type="GeneID" id="841528"/>
<dbReference type="Gramene" id="AT1G51060.1">
    <property type="protein sequence ID" value="AT1G51060.1"/>
    <property type="gene ID" value="AT1G51060"/>
</dbReference>
<dbReference type="KEGG" id="ath:AT1G51060"/>
<dbReference type="Araport" id="AT1G51060"/>
<dbReference type="TAIR" id="AT1G51060">
    <property type="gene designation" value="HTA10"/>
</dbReference>
<dbReference type="eggNOG" id="KOG1756">
    <property type="taxonomic scope" value="Eukaryota"/>
</dbReference>
<dbReference type="HOGENOM" id="CLU_062828_3_0_1"/>
<dbReference type="InParanoid" id="Q9C681"/>
<dbReference type="OMA" id="KFQMAGR"/>
<dbReference type="OrthoDB" id="9421954at2759"/>
<dbReference type="PhylomeDB" id="Q9C681"/>
<dbReference type="CD-CODE" id="4299E36E">
    <property type="entry name" value="Nucleolus"/>
</dbReference>
<dbReference type="PRO" id="PR:Q9C681"/>
<dbReference type="Proteomes" id="UP000006548">
    <property type="component" value="Chromosome 1"/>
</dbReference>
<dbReference type="ExpressionAtlas" id="Q9C681">
    <property type="expression patterns" value="baseline and differential"/>
</dbReference>
<dbReference type="GO" id="GO:0005730">
    <property type="term" value="C:nucleolus"/>
    <property type="evidence" value="ECO:0007005"/>
    <property type="project" value="TAIR"/>
</dbReference>
<dbReference type="GO" id="GO:0000786">
    <property type="term" value="C:nucleosome"/>
    <property type="evidence" value="ECO:0007669"/>
    <property type="project" value="UniProtKB-KW"/>
</dbReference>
<dbReference type="GO" id="GO:0005634">
    <property type="term" value="C:nucleus"/>
    <property type="evidence" value="ECO:0007005"/>
    <property type="project" value="TAIR"/>
</dbReference>
<dbReference type="GO" id="GO:0009505">
    <property type="term" value="C:plant-type cell wall"/>
    <property type="evidence" value="ECO:0007005"/>
    <property type="project" value="TAIR"/>
</dbReference>
<dbReference type="GO" id="GO:0003677">
    <property type="term" value="F:DNA binding"/>
    <property type="evidence" value="ECO:0007669"/>
    <property type="project" value="UniProtKB-KW"/>
</dbReference>
<dbReference type="GO" id="GO:0046982">
    <property type="term" value="F:protein heterodimerization activity"/>
    <property type="evidence" value="ECO:0007669"/>
    <property type="project" value="InterPro"/>
</dbReference>
<dbReference type="GO" id="GO:0030527">
    <property type="term" value="F:structural constituent of chromatin"/>
    <property type="evidence" value="ECO:0007669"/>
    <property type="project" value="InterPro"/>
</dbReference>
<dbReference type="CDD" id="cd00074">
    <property type="entry name" value="HFD_H2A"/>
    <property type="match status" value="1"/>
</dbReference>
<dbReference type="FunFam" id="1.10.20.10:FF:000009">
    <property type="entry name" value="Histone H2A"/>
    <property type="match status" value="1"/>
</dbReference>
<dbReference type="Gene3D" id="1.10.20.10">
    <property type="entry name" value="Histone, subunit A"/>
    <property type="match status" value="1"/>
</dbReference>
<dbReference type="InterPro" id="IPR009072">
    <property type="entry name" value="Histone-fold"/>
</dbReference>
<dbReference type="InterPro" id="IPR002119">
    <property type="entry name" value="Histone_H2A"/>
</dbReference>
<dbReference type="InterPro" id="IPR007125">
    <property type="entry name" value="Histone_H2A/H2B/H3"/>
</dbReference>
<dbReference type="InterPro" id="IPR032454">
    <property type="entry name" value="Histone_H2A_C"/>
</dbReference>
<dbReference type="InterPro" id="IPR032458">
    <property type="entry name" value="Histone_H2A_CS"/>
</dbReference>
<dbReference type="PANTHER" id="PTHR23430">
    <property type="entry name" value="HISTONE H2A"/>
    <property type="match status" value="1"/>
</dbReference>
<dbReference type="Pfam" id="PF00125">
    <property type="entry name" value="Histone"/>
    <property type="match status" value="1"/>
</dbReference>
<dbReference type="Pfam" id="PF16211">
    <property type="entry name" value="Histone_H2A_C"/>
    <property type="match status" value="1"/>
</dbReference>
<dbReference type="PRINTS" id="PR00620">
    <property type="entry name" value="HISTONEH2A"/>
</dbReference>
<dbReference type="SMART" id="SM00414">
    <property type="entry name" value="H2A"/>
    <property type="match status" value="1"/>
</dbReference>
<dbReference type="SUPFAM" id="SSF47113">
    <property type="entry name" value="Histone-fold"/>
    <property type="match status" value="1"/>
</dbReference>
<dbReference type="PROSITE" id="PS00046">
    <property type="entry name" value="HISTONE_H2A"/>
    <property type="match status" value="1"/>
</dbReference>